<comment type="similarity">
    <text evidence="1">Belongs to the UPF0302 family.</text>
</comment>
<name>Y1032_STAEQ</name>
<evidence type="ECO:0000255" key="1">
    <source>
        <dbReference type="HAMAP-Rule" id="MF_00760"/>
    </source>
</evidence>
<accession>Q5HP81</accession>
<reference key="1">
    <citation type="journal article" date="2005" name="J. Bacteriol.">
        <title>Insights on evolution of virulence and resistance from the complete genome analysis of an early methicillin-resistant Staphylococcus aureus strain and a biofilm-producing methicillin-resistant Staphylococcus epidermidis strain.</title>
        <authorList>
            <person name="Gill S.R."/>
            <person name="Fouts D.E."/>
            <person name="Archer G.L."/>
            <person name="Mongodin E.F."/>
            <person name="DeBoy R.T."/>
            <person name="Ravel J."/>
            <person name="Paulsen I.T."/>
            <person name="Kolonay J.F."/>
            <person name="Brinkac L.M."/>
            <person name="Beanan M.J."/>
            <person name="Dodson R.J."/>
            <person name="Daugherty S.C."/>
            <person name="Madupu R."/>
            <person name="Angiuoli S.V."/>
            <person name="Durkin A.S."/>
            <person name="Haft D.H."/>
            <person name="Vamathevan J.J."/>
            <person name="Khouri H."/>
            <person name="Utterback T.R."/>
            <person name="Lee C."/>
            <person name="Dimitrov G."/>
            <person name="Jiang L."/>
            <person name="Qin H."/>
            <person name="Weidman J."/>
            <person name="Tran K."/>
            <person name="Kang K.H."/>
            <person name="Hance I.R."/>
            <person name="Nelson K.E."/>
            <person name="Fraser C.M."/>
        </authorList>
    </citation>
    <scope>NUCLEOTIDE SEQUENCE [LARGE SCALE GENOMIC DNA]</scope>
    <source>
        <strain>ATCC 35984 / DSM 28319 / BCRC 17069 / CCUG 31568 / BM 3577 / RP62A</strain>
    </source>
</reference>
<proteinExistence type="inferred from homology"/>
<protein>
    <recommendedName>
        <fullName evidence="1">UPF0302 protein SERP1032</fullName>
    </recommendedName>
</protein>
<keyword id="KW-1185">Reference proteome</keyword>
<feature type="chain" id="PRO_0000216111" description="UPF0302 protein SERP1032">
    <location>
        <begin position="1"/>
        <end position="187"/>
    </location>
</feature>
<gene>
    <name type="ordered locus">SERP1032</name>
</gene>
<sequence>MNDSLIRIKQNFIEYILFNYRFKSRITVWVLNYLKANQDKLNNVHFVNSKINNHYTLEIAEVDATASAIQLSKDNKSYINTNQIFNYIANHTLRLDIQIHFANCHIRESRLDDLILMQLIHSPSYSSYVQDLYSISMDKRKQTFIIQTLQNNIDLSLQMNEPDYFYQLTQILNVLKSKDIQSTLHER</sequence>
<dbReference type="EMBL" id="CP000029">
    <property type="protein sequence ID" value="AAW54416.1"/>
    <property type="molecule type" value="Genomic_DNA"/>
</dbReference>
<dbReference type="RefSeq" id="WP_001831161.1">
    <property type="nucleotide sequence ID" value="NC_002976.3"/>
</dbReference>
<dbReference type="SMR" id="Q5HP81"/>
<dbReference type="STRING" id="176279.SERP1032"/>
<dbReference type="KEGG" id="ser:SERP1032"/>
<dbReference type="eggNOG" id="COG5582">
    <property type="taxonomic scope" value="Bacteria"/>
</dbReference>
<dbReference type="HOGENOM" id="CLU_122408_0_0_9"/>
<dbReference type="Proteomes" id="UP000000531">
    <property type="component" value="Chromosome"/>
</dbReference>
<dbReference type="Gene3D" id="3.40.1530.30">
    <property type="entry name" value="Uncharacterised family UPF0302, N-terminal domain"/>
    <property type="match status" value="1"/>
</dbReference>
<dbReference type="HAMAP" id="MF_00760">
    <property type="entry name" value="UPF0302"/>
    <property type="match status" value="1"/>
</dbReference>
<dbReference type="InterPro" id="IPR014957">
    <property type="entry name" value="IDEAL_dom"/>
</dbReference>
<dbReference type="InterPro" id="IPR011188">
    <property type="entry name" value="UPF0302"/>
</dbReference>
<dbReference type="InterPro" id="IPR014963">
    <property type="entry name" value="UPF0302_N"/>
</dbReference>
<dbReference type="InterPro" id="IPR038091">
    <property type="entry name" value="UPF0302_N_sf"/>
</dbReference>
<dbReference type="Pfam" id="PF08858">
    <property type="entry name" value="IDEAL"/>
    <property type="match status" value="1"/>
</dbReference>
<dbReference type="Pfam" id="PF08864">
    <property type="entry name" value="UPF0302"/>
    <property type="match status" value="1"/>
</dbReference>
<dbReference type="PIRSF" id="PIRSF007165">
    <property type="entry name" value="UCP007165"/>
    <property type="match status" value="1"/>
</dbReference>
<dbReference type="SMART" id="SM00914">
    <property type="entry name" value="IDEAL"/>
    <property type="match status" value="1"/>
</dbReference>
<organism>
    <name type="scientific">Staphylococcus epidermidis (strain ATCC 35984 / DSM 28319 / BCRC 17069 / CCUG 31568 / BM 3577 / RP62A)</name>
    <dbReference type="NCBI Taxonomy" id="176279"/>
    <lineage>
        <taxon>Bacteria</taxon>
        <taxon>Bacillati</taxon>
        <taxon>Bacillota</taxon>
        <taxon>Bacilli</taxon>
        <taxon>Bacillales</taxon>
        <taxon>Staphylococcaceae</taxon>
        <taxon>Staphylococcus</taxon>
    </lineage>
</organism>